<accession>C3KYF7</accession>
<keyword id="KW-0067">ATP-binding</keyword>
<keyword id="KW-0414">Isoprene biosynthesis</keyword>
<keyword id="KW-0418">Kinase</keyword>
<keyword id="KW-0547">Nucleotide-binding</keyword>
<keyword id="KW-0808">Transferase</keyword>
<feature type="chain" id="PRO_1000202375" description="4-diphosphocytidyl-2-C-methyl-D-erythritol kinase">
    <location>
        <begin position="1"/>
        <end position="280"/>
    </location>
</feature>
<feature type="active site" evidence="1">
    <location>
        <position position="8"/>
    </location>
</feature>
<feature type="active site" evidence="1">
    <location>
        <position position="133"/>
    </location>
</feature>
<feature type="binding site" evidence="1">
    <location>
        <begin position="91"/>
        <end position="101"/>
    </location>
    <ligand>
        <name>ATP</name>
        <dbReference type="ChEBI" id="CHEBI:30616"/>
    </ligand>
</feature>
<reference key="1">
    <citation type="submission" date="2008-05" db="EMBL/GenBank/DDBJ databases">
        <title>Genome sequence of Clostridium botulinum Ba4 strain 657.</title>
        <authorList>
            <person name="Shrivastava S."/>
            <person name="Brown J.L."/>
            <person name="Bruce D."/>
            <person name="Detter C."/>
            <person name="Munk C."/>
            <person name="Smith L.A."/>
            <person name="Smith T.J."/>
            <person name="Sutton G."/>
            <person name="Brettin T.S."/>
        </authorList>
    </citation>
    <scope>NUCLEOTIDE SEQUENCE [LARGE SCALE GENOMIC DNA]</scope>
    <source>
        <strain>657 / Type Ba4</strain>
    </source>
</reference>
<protein>
    <recommendedName>
        <fullName evidence="1">4-diphosphocytidyl-2-C-methyl-D-erythritol kinase</fullName>
        <shortName evidence="1">CMK</shortName>
        <ecNumber evidence="1">2.7.1.148</ecNumber>
    </recommendedName>
    <alternativeName>
        <fullName evidence="1">4-(cytidine-5'-diphospho)-2-C-methyl-D-erythritol kinase</fullName>
    </alternativeName>
</protein>
<sequence>MLSKAHAKVNLSLDVIGKRKDGYHLLKMLMQTIDLYDLIEIKKIKKGIIIDCDREYIPKDRRNLAYKAAELFLDRYNIDSGVRIDITKNIPVAAGLAGGSTDAATVLKIMRDIFRPDISNEELKEIALDIGADVPFCIEGGTALCEGIGEKITPIKNFKNQILVLVKPNFGLSTKDVYNNLKVEKIYIHPNTTKLIQSIEEDNLKSVARNMRNVLENVTLRKYKALNSIKSNFIELGALGSMMSGSGPSVFGLFDDMLKAQICYDNMKEKYKEVFITRTI</sequence>
<organism>
    <name type="scientific">Clostridium botulinum (strain 657 / Type Ba4)</name>
    <dbReference type="NCBI Taxonomy" id="515621"/>
    <lineage>
        <taxon>Bacteria</taxon>
        <taxon>Bacillati</taxon>
        <taxon>Bacillota</taxon>
        <taxon>Clostridia</taxon>
        <taxon>Eubacteriales</taxon>
        <taxon>Clostridiaceae</taxon>
        <taxon>Clostridium</taxon>
    </lineage>
</organism>
<dbReference type="EC" id="2.7.1.148" evidence="1"/>
<dbReference type="EMBL" id="CP001083">
    <property type="protein sequence ID" value="ACQ52868.1"/>
    <property type="molecule type" value="Genomic_DNA"/>
</dbReference>
<dbReference type="RefSeq" id="WP_003356533.1">
    <property type="nucleotide sequence ID" value="NC_012658.1"/>
</dbReference>
<dbReference type="SMR" id="C3KYF7"/>
<dbReference type="KEGG" id="cbi:CLJ_B0159"/>
<dbReference type="HOGENOM" id="CLU_053057_1_1_9"/>
<dbReference type="UniPathway" id="UPA00056">
    <property type="reaction ID" value="UER00094"/>
</dbReference>
<dbReference type="Proteomes" id="UP000002333">
    <property type="component" value="Chromosome"/>
</dbReference>
<dbReference type="GO" id="GO:0050515">
    <property type="term" value="F:4-(cytidine 5'-diphospho)-2-C-methyl-D-erythritol kinase activity"/>
    <property type="evidence" value="ECO:0007669"/>
    <property type="project" value="UniProtKB-UniRule"/>
</dbReference>
<dbReference type="GO" id="GO:0005524">
    <property type="term" value="F:ATP binding"/>
    <property type="evidence" value="ECO:0007669"/>
    <property type="project" value="UniProtKB-UniRule"/>
</dbReference>
<dbReference type="GO" id="GO:0019288">
    <property type="term" value="P:isopentenyl diphosphate biosynthetic process, methylerythritol 4-phosphate pathway"/>
    <property type="evidence" value="ECO:0007669"/>
    <property type="project" value="UniProtKB-UniRule"/>
</dbReference>
<dbReference type="GO" id="GO:0016114">
    <property type="term" value="P:terpenoid biosynthetic process"/>
    <property type="evidence" value="ECO:0007669"/>
    <property type="project" value="InterPro"/>
</dbReference>
<dbReference type="FunFam" id="3.30.230.10:FF:000029">
    <property type="entry name" value="4-diphosphocytidyl-2-C-methyl-D-erythritol kinase"/>
    <property type="match status" value="1"/>
</dbReference>
<dbReference type="Gene3D" id="3.30.230.10">
    <property type="match status" value="1"/>
</dbReference>
<dbReference type="Gene3D" id="3.30.70.890">
    <property type="entry name" value="GHMP kinase, C-terminal domain"/>
    <property type="match status" value="1"/>
</dbReference>
<dbReference type="HAMAP" id="MF_00061">
    <property type="entry name" value="IspE"/>
    <property type="match status" value="1"/>
</dbReference>
<dbReference type="InterPro" id="IPR013750">
    <property type="entry name" value="GHMP_kinase_C_dom"/>
</dbReference>
<dbReference type="InterPro" id="IPR036554">
    <property type="entry name" value="GHMP_kinase_C_sf"/>
</dbReference>
<dbReference type="InterPro" id="IPR006204">
    <property type="entry name" value="GHMP_kinase_N_dom"/>
</dbReference>
<dbReference type="InterPro" id="IPR004424">
    <property type="entry name" value="IspE"/>
</dbReference>
<dbReference type="InterPro" id="IPR020568">
    <property type="entry name" value="Ribosomal_Su5_D2-typ_SF"/>
</dbReference>
<dbReference type="InterPro" id="IPR014721">
    <property type="entry name" value="Ribsml_uS5_D2-typ_fold_subgr"/>
</dbReference>
<dbReference type="NCBIfam" id="TIGR00154">
    <property type="entry name" value="ispE"/>
    <property type="match status" value="1"/>
</dbReference>
<dbReference type="PANTHER" id="PTHR43527">
    <property type="entry name" value="4-DIPHOSPHOCYTIDYL-2-C-METHYL-D-ERYTHRITOL KINASE, CHLOROPLASTIC"/>
    <property type="match status" value="1"/>
</dbReference>
<dbReference type="PANTHER" id="PTHR43527:SF2">
    <property type="entry name" value="4-DIPHOSPHOCYTIDYL-2-C-METHYL-D-ERYTHRITOL KINASE, CHLOROPLASTIC"/>
    <property type="match status" value="1"/>
</dbReference>
<dbReference type="Pfam" id="PF08544">
    <property type="entry name" value="GHMP_kinases_C"/>
    <property type="match status" value="1"/>
</dbReference>
<dbReference type="Pfam" id="PF00288">
    <property type="entry name" value="GHMP_kinases_N"/>
    <property type="match status" value="1"/>
</dbReference>
<dbReference type="PIRSF" id="PIRSF010376">
    <property type="entry name" value="IspE"/>
    <property type="match status" value="1"/>
</dbReference>
<dbReference type="SUPFAM" id="SSF55060">
    <property type="entry name" value="GHMP Kinase, C-terminal domain"/>
    <property type="match status" value="1"/>
</dbReference>
<dbReference type="SUPFAM" id="SSF54211">
    <property type="entry name" value="Ribosomal protein S5 domain 2-like"/>
    <property type="match status" value="1"/>
</dbReference>
<proteinExistence type="inferred from homology"/>
<evidence type="ECO:0000255" key="1">
    <source>
        <dbReference type="HAMAP-Rule" id="MF_00061"/>
    </source>
</evidence>
<gene>
    <name evidence="1" type="primary">ispE</name>
    <name type="ordered locus">CLJ_B0159</name>
</gene>
<comment type="function">
    <text evidence="1">Catalyzes the phosphorylation of the position 2 hydroxy group of 4-diphosphocytidyl-2C-methyl-D-erythritol.</text>
</comment>
<comment type="catalytic activity">
    <reaction evidence="1">
        <text>4-CDP-2-C-methyl-D-erythritol + ATP = 4-CDP-2-C-methyl-D-erythritol 2-phosphate + ADP + H(+)</text>
        <dbReference type="Rhea" id="RHEA:18437"/>
        <dbReference type="ChEBI" id="CHEBI:15378"/>
        <dbReference type="ChEBI" id="CHEBI:30616"/>
        <dbReference type="ChEBI" id="CHEBI:57823"/>
        <dbReference type="ChEBI" id="CHEBI:57919"/>
        <dbReference type="ChEBI" id="CHEBI:456216"/>
        <dbReference type="EC" id="2.7.1.148"/>
    </reaction>
</comment>
<comment type="pathway">
    <text evidence="1">Isoprenoid biosynthesis; isopentenyl diphosphate biosynthesis via DXP pathway; isopentenyl diphosphate from 1-deoxy-D-xylulose 5-phosphate: step 3/6.</text>
</comment>
<comment type="similarity">
    <text evidence="1">Belongs to the GHMP kinase family. IspE subfamily.</text>
</comment>
<name>ISPE_CLOB6</name>